<organism>
    <name type="scientific">Conus pictus</name>
    <name type="common">Cone snail</name>
    <dbReference type="NCBI Taxonomy" id="1042615"/>
    <lineage>
        <taxon>Eukaryota</taxon>
        <taxon>Metazoa</taxon>
        <taxon>Spiralia</taxon>
        <taxon>Lophotrochozoa</taxon>
        <taxon>Mollusca</taxon>
        <taxon>Gastropoda</taxon>
        <taxon>Caenogastropoda</taxon>
        <taxon>Neogastropoda</taxon>
        <taxon>Conoidea</taxon>
        <taxon>Conidae</taxon>
        <taxon>Conus</taxon>
        <taxon>Sciteconus</taxon>
    </lineage>
</organism>
<feature type="peptide" id="PRO_0000424797" description="Conotoxin pc1b" evidence="2">
    <location>
        <begin position="1"/>
        <end position="18"/>
    </location>
</feature>
<feature type="disulfide bond" evidence="1">
    <location>
        <begin position="3"/>
        <end position="9"/>
    </location>
</feature>
<feature type="disulfide bond" evidence="1">
    <location>
        <begin position="4"/>
        <end position="17"/>
    </location>
</feature>
<name>CU1B_CONPB</name>
<evidence type="ECO:0000250" key="1">
    <source>
        <dbReference type="UniProtKB" id="P56636"/>
    </source>
</evidence>
<evidence type="ECO:0000269" key="2">
    <source>
    </source>
</evidence>
<evidence type="ECO:0000303" key="3">
    <source>
    </source>
</evidence>
<evidence type="ECO:0000305" key="4"/>
<evidence type="ECO:0000305" key="5">
    <source>
    </source>
</evidence>
<proteinExistence type="evidence at protein level"/>
<keyword id="KW-0903">Direct protein sequencing</keyword>
<keyword id="KW-1015">Disulfide bond</keyword>
<keyword id="KW-0964">Secreted</keyword>
<keyword id="KW-0800">Toxin</keyword>
<dbReference type="ConoServer" id="5857">
    <property type="toxin name" value="Pc1b"/>
</dbReference>
<dbReference type="GO" id="GO:0005576">
    <property type="term" value="C:extracellular region"/>
    <property type="evidence" value="ECO:0007669"/>
    <property type="project" value="UniProtKB-SubCell"/>
</dbReference>
<dbReference type="GO" id="GO:0090729">
    <property type="term" value="F:toxin activity"/>
    <property type="evidence" value="ECO:0007669"/>
    <property type="project" value="UniProtKB-KW"/>
</dbReference>
<accession>P0DMA0</accession>
<comment type="subcellular location">
    <subcellularLocation>
        <location evidence="2">Secreted</location>
    </subcellularLocation>
</comment>
<comment type="tissue specificity">
    <text evidence="5">Expressed by the venom duct.</text>
</comment>
<comment type="domain">
    <text evidence="4">The cysteine framework is I (CC-C-C). Alpha4/7 pattern.</text>
</comment>
<comment type="mass spectrometry">
    <text>monoisotopic.</text>
</comment>
<protein>
    <recommendedName>
        <fullName evidence="3">Conotoxin pc1b</fullName>
    </recommendedName>
</protein>
<sequence>DECCAIPLCAKIFPGRCP</sequence>
<reference key="1">
    <citation type="journal article" date="2013" name="Peptides">
        <title>Unraveling the peptidome of the South African cone snails Conus pictus and Conus natalis.</title>
        <authorList>
            <person name="Peigneur S."/>
            <person name="Van Der Haegen A."/>
            <person name="Moller C."/>
            <person name="Waelkens E."/>
            <person name="Diego-Garcia E."/>
            <person name="Mari F."/>
            <person name="Naude R."/>
            <person name="Tytgat J."/>
        </authorList>
    </citation>
    <scope>PROTEIN SEQUENCE</scope>
    <scope>MASS SPECTROMETRY</scope>
    <scope>SUBCELLULAR LOCATION</scope>
    <source>
        <tissue>Venom</tissue>
    </source>
</reference>